<gene>
    <name evidence="1" type="primary">ygiB</name>
    <name type="ordered locus">EcSMS35_3331</name>
</gene>
<accession>B1LF30</accession>
<evidence type="ECO:0000255" key="1">
    <source>
        <dbReference type="HAMAP-Rule" id="MF_01188"/>
    </source>
</evidence>
<evidence type="ECO:0000256" key="2">
    <source>
        <dbReference type="SAM" id="MobiDB-lite"/>
    </source>
</evidence>
<protein>
    <recommendedName>
        <fullName evidence="1">UPF0441 protein YgiB</fullName>
    </recommendedName>
</protein>
<proteinExistence type="inferred from homology"/>
<name>YGIB_ECOSM</name>
<sequence>MKRTKSIRHASFRKNWSARHLTPVALAVATVFMLAGCEKSDETVSLYQNADDCSAANPGKSAECTTAYNNALKEAERTAPKYATREDCVAEFGEGQCQQAPAQAGMAPENQAQAQQSSGSFWMPLMAGYMMGRLMGGGAGFAQQPLFSSKNPASPAYGKYTDATGKNYGAAQPGRTMTVPKTAMAPKPATTTTVTRGGFGESVAKQSTMQRSATGTSSRSMGG</sequence>
<reference key="1">
    <citation type="journal article" date="2008" name="J. Bacteriol.">
        <title>Insights into the environmental resistance gene pool from the genome sequence of the multidrug-resistant environmental isolate Escherichia coli SMS-3-5.</title>
        <authorList>
            <person name="Fricke W.F."/>
            <person name="Wright M.S."/>
            <person name="Lindell A.H."/>
            <person name="Harkins D.M."/>
            <person name="Baker-Austin C."/>
            <person name="Ravel J."/>
            <person name="Stepanauskas R."/>
        </authorList>
    </citation>
    <scope>NUCLEOTIDE SEQUENCE [LARGE SCALE GENOMIC DNA]</scope>
    <source>
        <strain>SMS-3-5 / SECEC</strain>
    </source>
</reference>
<feature type="chain" id="PRO_1000138344" description="UPF0441 protein YgiB">
    <location>
        <begin position="1"/>
        <end position="223"/>
    </location>
</feature>
<feature type="region of interest" description="Disordered" evidence="2">
    <location>
        <begin position="178"/>
        <end position="223"/>
    </location>
</feature>
<feature type="compositionally biased region" description="Low complexity" evidence="2">
    <location>
        <begin position="178"/>
        <end position="195"/>
    </location>
</feature>
<feature type="compositionally biased region" description="Polar residues" evidence="2">
    <location>
        <begin position="204"/>
        <end position="223"/>
    </location>
</feature>
<organism>
    <name type="scientific">Escherichia coli (strain SMS-3-5 / SECEC)</name>
    <dbReference type="NCBI Taxonomy" id="439855"/>
    <lineage>
        <taxon>Bacteria</taxon>
        <taxon>Pseudomonadati</taxon>
        <taxon>Pseudomonadota</taxon>
        <taxon>Gammaproteobacteria</taxon>
        <taxon>Enterobacterales</taxon>
        <taxon>Enterobacteriaceae</taxon>
        <taxon>Escherichia</taxon>
    </lineage>
</organism>
<comment type="similarity">
    <text evidence="1">Belongs to the UPF0441 family.</text>
</comment>
<dbReference type="EMBL" id="CP000970">
    <property type="protein sequence ID" value="ACB17620.1"/>
    <property type="molecule type" value="Genomic_DNA"/>
</dbReference>
<dbReference type="RefSeq" id="WP_000831543.1">
    <property type="nucleotide sequence ID" value="NC_010498.1"/>
</dbReference>
<dbReference type="SMR" id="B1LF30"/>
<dbReference type="KEGG" id="ecm:EcSMS35_3331"/>
<dbReference type="HOGENOM" id="CLU_095624_0_0_6"/>
<dbReference type="Proteomes" id="UP000007011">
    <property type="component" value="Chromosome"/>
</dbReference>
<dbReference type="HAMAP" id="MF_01188">
    <property type="entry name" value="UPF0441"/>
    <property type="match status" value="1"/>
</dbReference>
<dbReference type="InterPro" id="IPR009576">
    <property type="entry name" value="Biofilm_formation_YgiB"/>
</dbReference>
<dbReference type="NCBIfam" id="NF008655">
    <property type="entry name" value="PRK11653.1"/>
    <property type="match status" value="1"/>
</dbReference>
<dbReference type="Pfam" id="PF06693">
    <property type="entry name" value="DUF1190"/>
    <property type="match status" value="1"/>
</dbReference>